<dbReference type="EC" id="7.1.1.-" evidence="1"/>
<dbReference type="EMBL" id="AE015451">
    <property type="protein sequence ID" value="AAN69704.1"/>
    <property type="molecule type" value="Genomic_DNA"/>
</dbReference>
<dbReference type="RefSeq" id="NP_746240.1">
    <property type="nucleotide sequence ID" value="NC_002947.4"/>
</dbReference>
<dbReference type="RefSeq" id="WP_010954900.1">
    <property type="nucleotide sequence ID" value="NZ_CP169744.1"/>
</dbReference>
<dbReference type="SMR" id="Q88FH5"/>
<dbReference type="STRING" id="160488.PP_4121"/>
<dbReference type="PaxDb" id="160488-PP_4121"/>
<dbReference type="GeneID" id="83679190"/>
<dbReference type="KEGG" id="ppu:PP_4121"/>
<dbReference type="PATRIC" id="fig|160488.4.peg.4380"/>
<dbReference type="eggNOG" id="COG0649">
    <property type="taxonomic scope" value="Bacteria"/>
</dbReference>
<dbReference type="eggNOG" id="COG0852">
    <property type="taxonomic scope" value="Bacteria"/>
</dbReference>
<dbReference type="HOGENOM" id="CLU_015134_3_2_6"/>
<dbReference type="OrthoDB" id="9801496at2"/>
<dbReference type="PhylomeDB" id="Q88FH5"/>
<dbReference type="BioCyc" id="MetaCyc:G1G01-4388-MONOMER"/>
<dbReference type="BioCyc" id="PPUT160488:G1G01-4388-MONOMER"/>
<dbReference type="Proteomes" id="UP000000556">
    <property type="component" value="Chromosome"/>
</dbReference>
<dbReference type="GO" id="GO:0030964">
    <property type="term" value="C:NADH dehydrogenase complex"/>
    <property type="evidence" value="ECO:0007669"/>
    <property type="project" value="InterPro"/>
</dbReference>
<dbReference type="GO" id="GO:0005886">
    <property type="term" value="C:plasma membrane"/>
    <property type="evidence" value="ECO:0007669"/>
    <property type="project" value="UniProtKB-SubCell"/>
</dbReference>
<dbReference type="GO" id="GO:0051287">
    <property type="term" value="F:NAD binding"/>
    <property type="evidence" value="ECO:0007669"/>
    <property type="project" value="InterPro"/>
</dbReference>
<dbReference type="GO" id="GO:0008137">
    <property type="term" value="F:NADH dehydrogenase (ubiquinone) activity"/>
    <property type="evidence" value="ECO:0007669"/>
    <property type="project" value="InterPro"/>
</dbReference>
<dbReference type="GO" id="GO:0050136">
    <property type="term" value="F:NADH:ubiquinone reductase (non-electrogenic) activity"/>
    <property type="evidence" value="ECO:0007669"/>
    <property type="project" value="UniProtKB-UniRule"/>
</dbReference>
<dbReference type="GO" id="GO:0048038">
    <property type="term" value="F:quinone binding"/>
    <property type="evidence" value="ECO:0007669"/>
    <property type="project" value="UniProtKB-KW"/>
</dbReference>
<dbReference type="FunFam" id="1.10.645.10:FF:000001">
    <property type="entry name" value="NADH-quinone oxidoreductase subunit C/D"/>
    <property type="match status" value="1"/>
</dbReference>
<dbReference type="FunFam" id="3.30.460.80:FF:000001">
    <property type="entry name" value="NADH-quinone oxidoreductase subunit C/D"/>
    <property type="match status" value="1"/>
</dbReference>
<dbReference type="Gene3D" id="1.10.645.10">
    <property type="entry name" value="Cytochrome-c3 Hydrogenase, chain B"/>
    <property type="match status" value="1"/>
</dbReference>
<dbReference type="Gene3D" id="3.30.460.80">
    <property type="entry name" value="NADH:ubiquinone oxidoreductase, 30kDa subunit"/>
    <property type="match status" value="1"/>
</dbReference>
<dbReference type="HAMAP" id="MF_01357">
    <property type="entry name" value="NDH1_NuoC"/>
    <property type="match status" value="1"/>
</dbReference>
<dbReference type="HAMAP" id="MF_01359">
    <property type="entry name" value="NDH1_NuoCD_1"/>
    <property type="match status" value="1"/>
</dbReference>
<dbReference type="HAMAP" id="MF_01358">
    <property type="entry name" value="NDH1_NuoD"/>
    <property type="match status" value="1"/>
</dbReference>
<dbReference type="InterPro" id="IPR010218">
    <property type="entry name" value="NADH_DH_suC"/>
</dbReference>
<dbReference type="InterPro" id="IPR023062">
    <property type="entry name" value="NADH_DH_suCD"/>
</dbReference>
<dbReference type="InterPro" id="IPR001135">
    <property type="entry name" value="NADH_Q_OxRdtase_suD"/>
</dbReference>
<dbReference type="InterPro" id="IPR037232">
    <property type="entry name" value="NADH_quin_OxRdtase_su_C/D-like"/>
</dbReference>
<dbReference type="InterPro" id="IPR001268">
    <property type="entry name" value="NADH_UbQ_OxRdtase_30kDa_su"/>
</dbReference>
<dbReference type="InterPro" id="IPR014029">
    <property type="entry name" value="NADH_UbQ_OxRdtase_49kDa_CS"/>
</dbReference>
<dbReference type="InterPro" id="IPR022885">
    <property type="entry name" value="NDH1_su_D/H"/>
</dbReference>
<dbReference type="InterPro" id="IPR029014">
    <property type="entry name" value="NiFe-Hase_large"/>
</dbReference>
<dbReference type="NCBIfam" id="TIGR01961">
    <property type="entry name" value="NuoC_fam"/>
    <property type="match status" value="1"/>
</dbReference>
<dbReference type="NCBIfam" id="TIGR01962">
    <property type="entry name" value="NuoD"/>
    <property type="match status" value="1"/>
</dbReference>
<dbReference type="NCBIfam" id="NF004739">
    <property type="entry name" value="PRK06075.1"/>
    <property type="match status" value="1"/>
</dbReference>
<dbReference type="NCBIfam" id="NF008728">
    <property type="entry name" value="PRK11742.1"/>
    <property type="match status" value="1"/>
</dbReference>
<dbReference type="PANTHER" id="PTHR11993:SF45">
    <property type="entry name" value="NADH-QUINONE OXIDOREDUCTASE SUBUNIT C_D"/>
    <property type="match status" value="1"/>
</dbReference>
<dbReference type="PANTHER" id="PTHR11993">
    <property type="entry name" value="NADH-UBIQUINONE OXIDOREDUCTASE 49 KDA SUBUNIT"/>
    <property type="match status" value="1"/>
</dbReference>
<dbReference type="Pfam" id="PF00329">
    <property type="entry name" value="Complex1_30kDa"/>
    <property type="match status" value="1"/>
</dbReference>
<dbReference type="Pfam" id="PF00346">
    <property type="entry name" value="Complex1_49kDa"/>
    <property type="match status" value="1"/>
</dbReference>
<dbReference type="SUPFAM" id="SSF56762">
    <property type="entry name" value="HydB/Nqo4-like"/>
    <property type="match status" value="1"/>
</dbReference>
<dbReference type="SUPFAM" id="SSF143243">
    <property type="entry name" value="Nqo5-like"/>
    <property type="match status" value="1"/>
</dbReference>
<dbReference type="PROSITE" id="PS00535">
    <property type="entry name" value="COMPLEX1_49K"/>
    <property type="match status" value="1"/>
</dbReference>
<sequence length="593" mass="67609">MTADNAIFIPPYKADDQDVVVELNNRFGADAFVAQETRTGMPVLWVKRAQLKEVLSFLRGVAKPYSMLYDLHGVDERLRTQRRGLPAADFSVFYHLLSIERNSDVMIKVSLSEGDLNLPTVTGIWPNANWYEREVWDMFGIDFAGHPHLSRIMMPPTWEGHPLRKDYPARATEFDPYSLTLAKQQLEEESARFNPEAWGMKRQGANEDYMFLNLGPNHPSAHGAFRIVLQLDGEEIVDCVPDIGYHHRGAEKMAERQSWHSFIPYTDRIDYLGGVMNNLPYVLAVEKLAGIKVPQKVDVIRIMLAEFFRITSHLLFLGTYIQDVGAMTPVFFTFTDRQRAYTVIEAITGFRLHPAWYRIGGVAHDLPRGWDKLVKDFVEWLPKRLDEYTKAALQNSILKGRTIGVAAYNTKEALEWGTTGAGLRATGCNFDLRKARPYSGYENFEFEVPLAHNGDAYDRCMVRVEEMRQSIRIIDQCLRNMPEGPYKADHPLTTPPPKERTLQHIETLITHFLQVSWGPVMPANESFQMIEATKGINSYYLTSDGGTMSYRTRIRTPSYPHLQQIPSVIKGSMVADLIAYLGSIDFVMADVDR</sequence>
<gene>
    <name evidence="1" type="primary">nuoC</name>
    <name evidence="1" type="synonym">nuoCD</name>
    <name evidence="1" type="synonym">nuoD</name>
    <name type="ordered locus">PP_4121</name>
</gene>
<name>NUOCD_PSEPK</name>
<organism>
    <name type="scientific">Pseudomonas putida (strain ATCC 47054 / DSM 6125 / CFBP 8728 / NCIMB 11950 / KT2440)</name>
    <dbReference type="NCBI Taxonomy" id="160488"/>
    <lineage>
        <taxon>Bacteria</taxon>
        <taxon>Pseudomonadati</taxon>
        <taxon>Pseudomonadota</taxon>
        <taxon>Gammaproteobacteria</taxon>
        <taxon>Pseudomonadales</taxon>
        <taxon>Pseudomonadaceae</taxon>
        <taxon>Pseudomonas</taxon>
    </lineage>
</organism>
<evidence type="ECO:0000255" key="1">
    <source>
        <dbReference type="HAMAP-Rule" id="MF_01359"/>
    </source>
</evidence>
<comment type="function">
    <text evidence="1">NDH-1 shuttles electrons from NADH, via FMN and iron-sulfur (Fe-S) centers, to quinones in the respiratory chain. The immediate electron acceptor for the enzyme in this species is believed to be ubiquinone. Couples the redox reaction to proton translocation (for every two electrons transferred, four hydrogen ions are translocated across the cytoplasmic membrane), and thus conserves the redox energy in a proton gradient.</text>
</comment>
<comment type="catalytic activity">
    <reaction evidence="1">
        <text>a quinone + NADH + 5 H(+)(in) = a quinol + NAD(+) + 4 H(+)(out)</text>
        <dbReference type="Rhea" id="RHEA:57888"/>
        <dbReference type="ChEBI" id="CHEBI:15378"/>
        <dbReference type="ChEBI" id="CHEBI:24646"/>
        <dbReference type="ChEBI" id="CHEBI:57540"/>
        <dbReference type="ChEBI" id="CHEBI:57945"/>
        <dbReference type="ChEBI" id="CHEBI:132124"/>
    </reaction>
</comment>
<comment type="subunit">
    <text evidence="1">NDH-1 is composed of 13 different subunits. Subunits NuoB, CD, E, F, and G constitute the peripheral sector of the complex.</text>
</comment>
<comment type="subcellular location">
    <subcellularLocation>
        <location evidence="1">Cell inner membrane</location>
        <topology evidence="1">Peripheral membrane protein</topology>
        <orientation evidence="1">Cytoplasmic side</orientation>
    </subcellularLocation>
</comment>
<comment type="similarity">
    <text evidence="1">In the N-terminal section; belongs to the complex I 30 kDa subunit family.</text>
</comment>
<comment type="similarity">
    <text evidence="1">In the C-terminal section; belongs to the complex I 49 kDa subunit family.</text>
</comment>
<reference key="1">
    <citation type="journal article" date="2002" name="Environ. Microbiol.">
        <title>Complete genome sequence and comparative analysis of the metabolically versatile Pseudomonas putida KT2440.</title>
        <authorList>
            <person name="Nelson K.E."/>
            <person name="Weinel C."/>
            <person name="Paulsen I.T."/>
            <person name="Dodson R.J."/>
            <person name="Hilbert H."/>
            <person name="Martins dos Santos V.A.P."/>
            <person name="Fouts D.E."/>
            <person name="Gill S.R."/>
            <person name="Pop M."/>
            <person name="Holmes M."/>
            <person name="Brinkac L.M."/>
            <person name="Beanan M.J."/>
            <person name="DeBoy R.T."/>
            <person name="Daugherty S.C."/>
            <person name="Kolonay J.F."/>
            <person name="Madupu R."/>
            <person name="Nelson W.C."/>
            <person name="White O."/>
            <person name="Peterson J.D."/>
            <person name="Khouri H.M."/>
            <person name="Hance I."/>
            <person name="Chris Lee P."/>
            <person name="Holtzapple E.K."/>
            <person name="Scanlan D."/>
            <person name="Tran K."/>
            <person name="Moazzez A."/>
            <person name="Utterback T.R."/>
            <person name="Rizzo M."/>
            <person name="Lee K."/>
            <person name="Kosack D."/>
            <person name="Moestl D."/>
            <person name="Wedler H."/>
            <person name="Lauber J."/>
            <person name="Stjepandic D."/>
            <person name="Hoheisel J."/>
            <person name="Straetz M."/>
            <person name="Heim S."/>
            <person name="Kiewitz C."/>
            <person name="Eisen J.A."/>
            <person name="Timmis K.N."/>
            <person name="Duesterhoeft A."/>
            <person name="Tuemmler B."/>
            <person name="Fraser C.M."/>
        </authorList>
    </citation>
    <scope>NUCLEOTIDE SEQUENCE [LARGE SCALE GENOMIC DNA]</scope>
    <source>
        <strain>ATCC 47054 / DSM 6125 / CFBP 8728 / NCIMB 11950 / KT2440</strain>
    </source>
</reference>
<accession>Q88FH5</accession>
<protein>
    <recommendedName>
        <fullName evidence="1">NADH-quinone oxidoreductase subunit C/D</fullName>
        <ecNumber evidence="1">7.1.1.-</ecNumber>
    </recommendedName>
    <alternativeName>
        <fullName evidence="1">NADH dehydrogenase I subunit C/D</fullName>
    </alternativeName>
    <alternativeName>
        <fullName evidence="1">NDH-1 subunit C/D</fullName>
    </alternativeName>
</protein>
<keyword id="KW-0997">Cell inner membrane</keyword>
<keyword id="KW-1003">Cell membrane</keyword>
<keyword id="KW-0472">Membrane</keyword>
<keyword id="KW-0511">Multifunctional enzyme</keyword>
<keyword id="KW-0520">NAD</keyword>
<keyword id="KW-0874">Quinone</keyword>
<keyword id="KW-1185">Reference proteome</keyword>
<keyword id="KW-1278">Translocase</keyword>
<keyword id="KW-0813">Transport</keyword>
<keyword id="KW-0830">Ubiquinone</keyword>
<feature type="chain" id="PRO_0000358663" description="NADH-quinone oxidoreductase subunit C/D">
    <location>
        <begin position="1"/>
        <end position="593"/>
    </location>
</feature>
<feature type="region of interest" description="NADH dehydrogenase I subunit C" evidence="1">
    <location>
        <begin position="1"/>
        <end position="184"/>
    </location>
</feature>
<feature type="region of interest" description="NADH dehydrogenase I subunit D" evidence="1">
    <location>
        <begin position="208"/>
        <end position="593"/>
    </location>
</feature>
<proteinExistence type="inferred from homology"/>